<sequence>MACLGLRRYKAQLQLPSRTWPFVALLTLLFIPVFSEAIQVTQPSVVLASSHGVASFPCEYSPSHNTDEVRVTVLRQTNDQMTEVCATTFTEKNTVGFLDYPFCSGTFNESRVNLTIQGLRAVDTGLYLCKVELMYPPPYFVGMGNGTQIYVIDPEPCPDSDFLLWILVAVSLGLFFYSFLVSAVSLSKMLKKRSPLTTGVYVKMPPTEPECEKQFQPYFIPIN</sequence>
<reference key="1">
    <citation type="journal article" date="1987" name="Nature">
        <title>A new member of the immunoglobulin superfamily -- CTLA-4.</title>
        <authorList>
            <person name="Brunet J.-F."/>
            <person name="Denizot F."/>
            <person name="Luciani M.-F."/>
            <person name="Roux-Dosseto M."/>
            <person name="Suzan M."/>
            <person name="Mattei M.-G."/>
            <person name="Golstein P."/>
        </authorList>
    </citation>
    <scope>NUCLEOTIDE SEQUENCE [MRNA]</scope>
</reference>
<reference key="2">
    <citation type="journal article" date="1999" name="Genomics">
        <title>Complete sequence determination of the mouse and human CTLA4 gene loci: cross-species DNA sequence similarity beyond exon borders.</title>
        <authorList>
            <person name="Ling V."/>
            <person name="Wu P.W."/>
            <person name="Finnerty H.F."/>
            <person name="Sharpe A.H."/>
            <person name="Gray G.S."/>
            <person name="Collins M."/>
        </authorList>
    </citation>
    <scope>NUCLEOTIDE SEQUENCE [GENOMIC DNA]</scope>
    <scope>TISSUE SPECIFICITY</scope>
    <source>
        <strain>129/SvJ</strain>
    </source>
</reference>
<reference key="3">
    <citation type="journal article" date="1991" name="J. Immunol.">
        <title>CTLA-4 and CD28 activated lymphocyte molecules are closely related in both mouse and human as to sequence, message expression, gene structure, and chromosomal location.</title>
        <authorList>
            <person name="Harper K."/>
            <person name="Balzano C."/>
            <person name="Rouvier E."/>
            <person name="Mattei M.-G."/>
            <person name="Luciani M.-F."/>
            <person name="Golstein P."/>
        </authorList>
    </citation>
    <scope>NUCLEOTIDE SEQUENCE OF 1-36</scope>
</reference>
<reference key="4">
    <citation type="journal article" date="2000" name="Science">
        <title>Structure of murine CTLA-4 and its role in modulating T cell responsiveness.</title>
        <authorList>
            <person name="Ostrov D.A."/>
            <person name="Shi W."/>
            <person name="Schwartz J.-C."/>
            <person name="Almo S.C."/>
            <person name="Nathenson S.G."/>
        </authorList>
    </citation>
    <scope>X-RAY CRYSTALLOGRAPHY (2.00 ANGSTROMS) OF 38-154</scope>
    <scope>DISULFIDE BONDS</scope>
</reference>
<name>CTLA4_MOUSE</name>
<accession>P09793</accession>
<accession>Q9QZZ7</accession>
<comment type="function">
    <text evidence="1">Inhibitory receptor acting as a major negative regulator of T-cell responses. The affinity of CTLA4 for its natural B7 family ligands, CD80 and CD86, is considerably stronger than the affinity of their cognate stimulatory coreceptor CD28.</text>
</comment>
<comment type="subunit">
    <text evidence="1">Homodimer; disulfide-linked. Binds to CD80/B7-1 and CD86/B7.2. Interacts with ICOSLG.</text>
</comment>
<comment type="subcellular location">
    <subcellularLocation>
        <location evidence="1">Cell membrane</location>
        <topology evidence="1">Single-pass type I membrane protein</topology>
    </subcellularLocation>
    <text evidence="1">Exists primarily an intracellular antigen whose surface expression is tightly regulated by restricted trafficking to the cell surface and rapid internalization.</text>
</comment>
<comment type="tissue specificity">
    <text evidence="4">Widely expressed with highest levels in lymphoid tissues.</text>
</comment>
<comment type="PTM">
    <text evidence="1">N-glycosylation is important for dimerization.</text>
</comment>
<comment type="PTM">
    <text evidence="1">Phosphorylation at Tyr-201 prevents binding to the AP-2 adapter complex, blocks endocytosis, and leads to retention of CTLA4 on the cell surface.</text>
</comment>
<gene>
    <name type="primary">Ctla4</name>
    <name type="synonym">Cd152</name>
</gene>
<evidence type="ECO:0000250" key="1">
    <source>
        <dbReference type="UniProtKB" id="P16410"/>
    </source>
</evidence>
<evidence type="ECO:0000255" key="2"/>
<evidence type="ECO:0000255" key="3">
    <source>
        <dbReference type="PROSITE-ProRule" id="PRU00114"/>
    </source>
</evidence>
<evidence type="ECO:0000269" key="4">
    <source>
    </source>
</evidence>
<evidence type="ECO:0000269" key="5">
    <source>
    </source>
</evidence>
<evidence type="ECO:0000305" key="6"/>
<evidence type="ECO:0007744" key="7">
    <source>
        <dbReference type="PDB" id="1DQT"/>
    </source>
</evidence>
<evidence type="ECO:0007829" key="8">
    <source>
        <dbReference type="PDB" id="1DQT"/>
    </source>
</evidence>
<evidence type="ECO:0007829" key="9">
    <source>
        <dbReference type="PDB" id="5E56"/>
    </source>
</evidence>
<keyword id="KW-0002">3D-structure</keyword>
<keyword id="KW-1064">Adaptive immunity</keyword>
<keyword id="KW-1003">Cell membrane</keyword>
<keyword id="KW-1015">Disulfide bond</keyword>
<keyword id="KW-0325">Glycoprotein</keyword>
<keyword id="KW-0391">Immunity</keyword>
<keyword id="KW-0393">Immunoglobulin domain</keyword>
<keyword id="KW-0472">Membrane</keyword>
<keyword id="KW-0597">Phosphoprotein</keyword>
<keyword id="KW-1185">Reference proteome</keyword>
<keyword id="KW-0732">Signal</keyword>
<keyword id="KW-0812">Transmembrane</keyword>
<keyword id="KW-1133">Transmembrane helix</keyword>
<organism>
    <name type="scientific">Mus musculus</name>
    <name type="common">Mouse</name>
    <dbReference type="NCBI Taxonomy" id="10090"/>
    <lineage>
        <taxon>Eukaryota</taxon>
        <taxon>Metazoa</taxon>
        <taxon>Chordata</taxon>
        <taxon>Craniata</taxon>
        <taxon>Vertebrata</taxon>
        <taxon>Euteleostomi</taxon>
        <taxon>Mammalia</taxon>
        <taxon>Eutheria</taxon>
        <taxon>Euarchontoglires</taxon>
        <taxon>Glires</taxon>
        <taxon>Rodentia</taxon>
        <taxon>Myomorpha</taxon>
        <taxon>Muroidea</taxon>
        <taxon>Muridae</taxon>
        <taxon>Murinae</taxon>
        <taxon>Mus</taxon>
        <taxon>Mus</taxon>
    </lineage>
</organism>
<proteinExistence type="evidence at protein level"/>
<protein>
    <recommendedName>
        <fullName>Cytotoxic T-lymphocyte protein 4</fullName>
    </recommendedName>
    <alternativeName>
        <fullName>Cytotoxic T-lymphocyte-associated antigen 4</fullName>
        <shortName>CTLA-4</shortName>
    </alternativeName>
    <cdAntigenName>CD152</cdAntigenName>
</protein>
<feature type="signal peptide" evidence="2">
    <location>
        <begin position="1"/>
        <end position="35"/>
    </location>
</feature>
<feature type="chain" id="PRO_0000014735" description="Cytotoxic T-lymphocyte protein 4">
    <location>
        <begin position="36"/>
        <end position="223"/>
    </location>
</feature>
<feature type="topological domain" description="Extracellular" evidence="2">
    <location>
        <begin position="36"/>
        <end position="161"/>
    </location>
</feature>
<feature type="transmembrane region" description="Helical" evidence="2">
    <location>
        <begin position="162"/>
        <end position="182"/>
    </location>
</feature>
<feature type="topological domain" description="Cytoplasmic" evidence="2">
    <location>
        <begin position="183"/>
        <end position="223"/>
    </location>
</feature>
<feature type="domain" description="Ig-like V-type">
    <location>
        <begin position="36"/>
        <end position="145"/>
    </location>
</feature>
<feature type="region of interest" description="Homodimerization" evidence="1">
    <location>
        <begin position="46"/>
        <end position="50"/>
    </location>
</feature>
<feature type="region of interest" description="Important for interaction with CD80 and CD86" evidence="1">
    <location>
        <begin position="134"/>
        <end position="139"/>
    </location>
</feature>
<feature type="region of interest" description="Homodimerization" evidence="1">
    <location>
        <begin position="150"/>
        <end position="155"/>
    </location>
</feature>
<feature type="modified residue" description="Phosphotyrosine; by TXK and JAK2" evidence="1">
    <location>
        <position position="201"/>
    </location>
</feature>
<feature type="glycosylation site" description="N-linked (GlcNAc...) asparagine" evidence="2">
    <location>
        <position position="108"/>
    </location>
</feature>
<feature type="glycosylation site" description="N-linked (GlcNAc...) asparagine" evidence="2">
    <location>
        <position position="113"/>
    </location>
</feature>
<feature type="glycosylation site" description="N-linked (GlcNAc...) asparagine" evidence="2">
    <location>
        <position position="145"/>
    </location>
</feature>
<feature type="disulfide bond" evidence="5 7">
    <location>
        <begin position="58"/>
        <end position="129"/>
    </location>
</feature>
<feature type="disulfide bond" evidence="5 7">
    <location>
        <begin position="85"/>
        <end position="103"/>
    </location>
</feature>
<feature type="disulfide bond" description="Interchain" evidence="3">
    <location>
        <position position="157"/>
    </location>
</feature>
<feature type="sequence conflict" description="In Ref. 2; AAF01489." evidence="6" ref="2">
    <original>S</original>
    <variation>T</variation>
    <location>
        <position position="182"/>
    </location>
</feature>
<feature type="strand" evidence="9">
    <location>
        <begin position="39"/>
        <end position="41"/>
    </location>
</feature>
<feature type="strand" evidence="9">
    <location>
        <begin position="44"/>
        <end position="47"/>
    </location>
</feature>
<feature type="strand" evidence="9">
    <location>
        <begin position="54"/>
        <end position="62"/>
    </location>
</feature>
<feature type="strand" evidence="9">
    <location>
        <begin position="68"/>
        <end position="79"/>
    </location>
</feature>
<feature type="strand" evidence="9">
    <location>
        <begin position="81"/>
        <end position="89"/>
    </location>
</feature>
<feature type="strand" evidence="8">
    <location>
        <begin position="91"/>
        <end position="96"/>
    </location>
</feature>
<feature type="strand" evidence="9">
    <location>
        <begin position="103"/>
        <end position="108"/>
    </location>
</feature>
<feature type="strand" evidence="9">
    <location>
        <begin position="111"/>
        <end position="116"/>
    </location>
</feature>
<feature type="helix" evidence="9">
    <location>
        <begin position="121"/>
        <end position="123"/>
    </location>
</feature>
<feature type="strand" evidence="9">
    <location>
        <begin position="125"/>
        <end position="138"/>
    </location>
</feature>
<feature type="strand" evidence="9">
    <location>
        <begin position="140"/>
        <end position="143"/>
    </location>
</feature>
<feature type="strand" evidence="9">
    <location>
        <begin position="147"/>
        <end position="150"/>
    </location>
</feature>
<dbReference type="EMBL" id="X05719">
    <property type="protein sequence ID" value="CAA29191.1"/>
    <property type="molecule type" value="mRNA"/>
</dbReference>
<dbReference type="EMBL" id="AF142145">
    <property type="protein sequence ID" value="AAF01489.1"/>
    <property type="molecule type" value="Genomic_DNA"/>
</dbReference>
<dbReference type="EMBL" id="M74362">
    <property type="protein sequence ID" value="AAA37489.1"/>
    <property type="molecule type" value="Genomic_DNA"/>
</dbReference>
<dbReference type="CCDS" id="CCDS14993.1"/>
<dbReference type="PIR" id="A29063">
    <property type="entry name" value="A29063"/>
</dbReference>
<dbReference type="RefSeq" id="NP_033973.2">
    <property type="nucleotide sequence ID" value="NM_009843.4"/>
</dbReference>
<dbReference type="PDB" id="1DQT">
    <property type="method" value="X-ray"/>
    <property type="resolution" value="2.00 A"/>
    <property type="chains" value="A/B/C/D=38-154"/>
</dbReference>
<dbReference type="PDB" id="5E56">
    <property type="method" value="X-ray"/>
    <property type="resolution" value="1.50 A"/>
    <property type="chains" value="A=38-154"/>
</dbReference>
<dbReference type="PDB" id="5E5M">
    <property type="method" value="X-ray"/>
    <property type="resolution" value="2.18 A"/>
    <property type="chains" value="A/C/E/G=38-154"/>
</dbReference>
<dbReference type="PDB" id="9DQ4">
    <property type="method" value="X-ray"/>
    <property type="resolution" value="1.57 A"/>
    <property type="chains" value="A=36-153"/>
</dbReference>
<dbReference type="PDB" id="9DQ5">
    <property type="method" value="X-ray"/>
    <property type="resolution" value="3.10 A"/>
    <property type="chains" value="C/D=35-153"/>
</dbReference>
<dbReference type="PDBsum" id="1DQT"/>
<dbReference type="PDBsum" id="5E56"/>
<dbReference type="PDBsum" id="5E5M"/>
<dbReference type="PDBsum" id="9DQ4"/>
<dbReference type="PDBsum" id="9DQ5"/>
<dbReference type="SMR" id="P09793"/>
<dbReference type="BioGRID" id="198575">
    <property type="interactions" value="1"/>
</dbReference>
<dbReference type="ELM" id="P09793"/>
<dbReference type="FunCoup" id="P09793">
    <property type="interactions" value="791"/>
</dbReference>
<dbReference type="IntAct" id="P09793">
    <property type="interactions" value="1"/>
</dbReference>
<dbReference type="MINT" id="P09793"/>
<dbReference type="STRING" id="10090.ENSMUSP00000027164"/>
<dbReference type="GlyCosmos" id="P09793">
    <property type="glycosylation" value="3 sites, No reported glycans"/>
</dbReference>
<dbReference type="GlyGen" id="P09793">
    <property type="glycosylation" value="3 sites, 1 N-linked glycan (1 site)"/>
</dbReference>
<dbReference type="iPTMnet" id="P09793"/>
<dbReference type="PhosphoSitePlus" id="P09793"/>
<dbReference type="PaxDb" id="10090-ENSMUSP00000027164"/>
<dbReference type="ProteomicsDB" id="285397"/>
<dbReference type="ABCD" id="P09793">
    <property type="antibodies" value="1 sequenced antibody"/>
</dbReference>
<dbReference type="DNASU" id="12477"/>
<dbReference type="GeneID" id="12477"/>
<dbReference type="KEGG" id="mmu:12477"/>
<dbReference type="AGR" id="MGI:88556"/>
<dbReference type="CTD" id="1493"/>
<dbReference type="MGI" id="MGI:88556">
    <property type="gene designation" value="Ctla4"/>
</dbReference>
<dbReference type="eggNOG" id="ENOG502RZVK">
    <property type="taxonomic scope" value="Eukaryota"/>
</dbReference>
<dbReference type="InParanoid" id="P09793"/>
<dbReference type="OrthoDB" id="9908091at2759"/>
<dbReference type="PhylomeDB" id="P09793"/>
<dbReference type="Reactome" id="R-MMU-389356">
    <property type="pathway name" value="Co-stimulation by CD28"/>
</dbReference>
<dbReference type="Reactome" id="R-MMU-389513">
    <property type="pathway name" value="Co-inhibition by CTLA4"/>
</dbReference>
<dbReference type="BioGRID-ORCS" id="12477">
    <property type="hits" value="1 hit in 82 CRISPR screens"/>
</dbReference>
<dbReference type="ChiTaRS" id="Ctla4">
    <property type="organism name" value="mouse"/>
</dbReference>
<dbReference type="EvolutionaryTrace" id="P09793"/>
<dbReference type="PRO" id="PR:P09793"/>
<dbReference type="Proteomes" id="UP000000589">
    <property type="component" value="Unplaced"/>
</dbReference>
<dbReference type="RNAct" id="P09793">
    <property type="molecule type" value="protein"/>
</dbReference>
<dbReference type="GO" id="GO:0009897">
    <property type="term" value="C:external side of plasma membrane"/>
    <property type="evidence" value="ECO:0000314"/>
    <property type="project" value="MGI"/>
</dbReference>
<dbReference type="GO" id="GO:0005886">
    <property type="term" value="C:plasma membrane"/>
    <property type="evidence" value="ECO:0000250"/>
    <property type="project" value="UniProtKB"/>
</dbReference>
<dbReference type="GO" id="GO:0098636">
    <property type="term" value="C:protein complex involved in cell adhesion"/>
    <property type="evidence" value="ECO:0000266"/>
    <property type="project" value="MGI"/>
</dbReference>
<dbReference type="GO" id="GO:0002250">
    <property type="term" value="P:adaptive immune response"/>
    <property type="evidence" value="ECO:0007669"/>
    <property type="project" value="UniProtKB-KW"/>
</dbReference>
<dbReference type="GO" id="GO:0042129">
    <property type="term" value="P:regulation of T cell proliferation"/>
    <property type="evidence" value="ECO:0007669"/>
    <property type="project" value="InterPro"/>
</dbReference>
<dbReference type="CDD" id="cd05721">
    <property type="entry name" value="IgV_CTLA-4"/>
    <property type="match status" value="1"/>
</dbReference>
<dbReference type="FunFam" id="2.60.40.10:FF:000686">
    <property type="entry name" value="Cytotoxic T-lymphocyte protein 4"/>
    <property type="match status" value="1"/>
</dbReference>
<dbReference type="Gene3D" id="2.60.40.10">
    <property type="entry name" value="Immunoglobulins"/>
    <property type="match status" value="1"/>
</dbReference>
<dbReference type="InterPro" id="IPR008096">
    <property type="entry name" value="CTLA4"/>
</dbReference>
<dbReference type="InterPro" id="IPR040216">
    <property type="entry name" value="CTLA4/CD28"/>
</dbReference>
<dbReference type="InterPro" id="IPR007110">
    <property type="entry name" value="Ig-like_dom"/>
</dbReference>
<dbReference type="InterPro" id="IPR036179">
    <property type="entry name" value="Ig-like_dom_sf"/>
</dbReference>
<dbReference type="InterPro" id="IPR013783">
    <property type="entry name" value="Ig-like_fold"/>
</dbReference>
<dbReference type="InterPro" id="IPR003599">
    <property type="entry name" value="Ig_sub"/>
</dbReference>
<dbReference type="InterPro" id="IPR013106">
    <property type="entry name" value="Ig_V-set"/>
</dbReference>
<dbReference type="PANTHER" id="PTHR11494">
    <property type="entry name" value="CYTOTOXIC T-LYMPHOCYTE PROTEIN"/>
    <property type="match status" value="1"/>
</dbReference>
<dbReference type="PANTHER" id="PTHR11494:SF8">
    <property type="entry name" value="CYTOTOXIC T-LYMPHOCYTE PROTEIN 4"/>
    <property type="match status" value="1"/>
</dbReference>
<dbReference type="Pfam" id="PF07686">
    <property type="entry name" value="V-set"/>
    <property type="match status" value="1"/>
</dbReference>
<dbReference type="PRINTS" id="PR01720">
    <property type="entry name" value="CTLANTIGEN4"/>
</dbReference>
<dbReference type="SMART" id="SM00409">
    <property type="entry name" value="IG"/>
    <property type="match status" value="1"/>
</dbReference>
<dbReference type="SMART" id="SM00406">
    <property type="entry name" value="IGv"/>
    <property type="match status" value="1"/>
</dbReference>
<dbReference type="SUPFAM" id="SSF48726">
    <property type="entry name" value="Immunoglobulin"/>
    <property type="match status" value="1"/>
</dbReference>
<dbReference type="PROSITE" id="PS50835">
    <property type="entry name" value="IG_LIKE"/>
    <property type="match status" value="1"/>
</dbReference>